<protein>
    <recommendedName>
        <fullName>Protein naked cuticle homolog</fullName>
    </recommendedName>
</protein>
<sequence length="715" mass="78601">MDLGIPEFTCDVSLEDGKKPQPLQFSFTLYDLDGHGKITKDDIAGIVSTIYESIGKSVVVPHYGSKTINVRLTVSPDGKTKQTASAVKKAAITPRRRYRPRKLISDDDGSDTSENCPRVMRTRANTVVANTTINNNVKHKDNNVAKDEDVVDGLTKSSEAVETTFHNNLNGKGKTLNVKNDNIYESINNLKCCNIQAAQASKPTVALSQSPGTLNNSTATTVICRDCSLEGCTIDETLPLGTVVIPATTPAAAISSRAKRKVVRKSRSSRKASKLTDDFSRPRARSLSVGNENCYENMIGTTQEECWKSSLCRRELIEIIRDSMVKNSLCFQPNRKPLENSPKHRHRSHTIAARIGAEHCGETVMATQQALVAAHETNLCGYDSYLHQTICAAANANHAALHLNGGVVGNGGVFTALPLTTSTPNRLLQHHSHHAHAKAKRKEHRLAVATRSQVHHQVAQPVKLSTAVLNQQYPNLSAEQKLSRSINQVEKWLDNRSPKLVNKLKLAEEIAEKSPRVAAAKLKRSKSKEEITHKSTKFENVLTTDLLLDNLKITEDIAELSVVTPKKIFNKECLISSATKKNIRTHHTTKTVSTTTAVVPPAVDKASKNLIQLQYASVPINAELSECENLIRISDAEEELHQSVQQQQGTHQQQQQPQSSVSSPTHHHHHHAGASLLGENSGSSASAASTTAVHRYVHEHIHHHYHHFENDPDES</sequence>
<proteinExistence type="inferred from homology"/>
<comment type="function">
    <text evidence="1">Cell autonomous antagonist of the canonical Wnt signaling pathway. May activate a second Wnt signaling pathway that controls planar cell polarity. Required for neuroblast specification (By similarity).</text>
</comment>
<comment type="subcellular location">
    <subcellularLocation>
        <location evidence="1">Cell membrane</location>
    </subcellularLocation>
    <subcellularLocation>
        <location evidence="1">Cytoplasm</location>
    </subcellularLocation>
    <subcellularLocation>
        <location evidence="1">Nucleus</location>
    </subcellularLocation>
</comment>
<comment type="similarity">
    <text evidence="2">Belongs to the NKD family.</text>
</comment>
<dbReference type="EMBL" id="CH478179">
    <property type="protein sequence ID" value="EAT33675.1"/>
    <property type="molecule type" value="Genomic_DNA"/>
</dbReference>
<dbReference type="RefSeq" id="XP_001664297.1">
    <property type="nucleotide sequence ID" value="XM_001664247.1"/>
</dbReference>
<dbReference type="FunCoup" id="Q16HE8">
    <property type="interactions" value="149"/>
</dbReference>
<dbReference type="STRING" id="7159.Q16HE8"/>
<dbReference type="PaxDb" id="7159-AAEL014048-PA"/>
<dbReference type="VEuPathDB" id="VectorBase:AAEL027204"/>
<dbReference type="eggNOG" id="ENOG502QT1X">
    <property type="taxonomic scope" value="Eukaryota"/>
</dbReference>
<dbReference type="HOGENOM" id="CLU_325475_0_0_1"/>
<dbReference type="InParanoid" id="Q16HE8"/>
<dbReference type="OMA" id="EQHTPDN"/>
<dbReference type="PhylomeDB" id="Q16HE8"/>
<dbReference type="Proteomes" id="UP000008820">
    <property type="component" value="Unassembled WGS sequence"/>
</dbReference>
<dbReference type="Proteomes" id="UP000682892">
    <property type="component" value="Unassembled WGS sequence"/>
</dbReference>
<dbReference type="GO" id="GO:0005737">
    <property type="term" value="C:cytoplasm"/>
    <property type="evidence" value="ECO:0000250"/>
    <property type="project" value="UniProtKB"/>
</dbReference>
<dbReference type="GO" id="GO:0005634">
    <property type="term" value="C:nucleus"/>
    <property type="evidence" value="ECO:0000250"/>
    <property type="project" value="UniProtKB"/>
</dbReference>
<dbReference type="GO" id="GO:0005886">
    <property type="term" value="C:plasma membrane"/>
    <property type="evidence" value="ECO:0007669"/>
    <property type="project" value="UniProtKB-SubCell"/>
</dbReference>
<dbReference type="GO" id="GO:0005509">
    <property type="term" value="F:calcium ion binding"/>
    <property type="evidence" value="ECO:0007669"/>
    <property type="project" value="InterPro"/>
</dbReference>
<dbReference type="GO" id="GO:0008270">
    <property type="term" value="F:zinc ion binding"/>
    <property type="evidence" value="ECO:0000250"/>
    <property type="project" value="UniProtKB"/>
</dbReference>
<dbReference type="GO" id="GO:0090090">
    <property type="term" value="P:negative regulation of canonical Wnt signaling pathway"/>
    <property type="evidence" value="ECO:0007669"/>
    <property type="project" value="UniProtKB-ARBA"/>
</dbReference>
<dbReference type="GO" id="GO:0014018">
    <property type="term" value="P:neuroblast fate specification"/>
    <property type="evidence" value="ECO:0000250"/>
    <property type="project" value="UniProtKB"/>
</dbReference>
<dbReference type="GO" id="GO:0016055">
    <property type="term" value="P:Wnt signaling pathway"/>
    <property type="evidence" value="ECO:0007669"/>
    <property type="project" value="UniProtKB-KW"/>
</dbReference>
<dbReference type="InterPro" id="IPR011992">
    <property type="entry name" value="EF-hand-dom_pair"/>
</dbReference>
<dbReference type="InterPro" id="IPR002048">
    <property type="entry name" value="EF_hand_dom"/>
</dbReference>
<dbReference type="InterPro" id="IPR040140">
    <property type="entry name" value="Nkd-like"/>
</dbReference>
<dbReference type="PANTHER" id="PTHR22611">
    <property type="entry name" value="PROTEIN NAKED CUTICLE"/>
    <property type="match status" value="1"/>
</dbReference>
<dbReference type="PANTHER" id="PTHR22611:SF9">
    <property type="entry name" value="PROTEIN NAKED CUTICLE"/>
    <property type="match status" value="1"/>
</dbReference>
<dbReference type="SUPFAM" id="SSF47473">
    <property type="entry name" value="EF-hand"/>
    <property type="match status" value="1"/>
</dbReference>
<dbReference type="PROSITE" id="PS50222">
    <property type="entry name" value="EF_HAND_2"/>
    <property type="match status" value="1"/>
</dbReference>
<feature type="chain" id="PRO_0000312825" description="Protein naked cuticle homolog">
    <location>
        <begin position="1"/>
        <end position="715"/>
    </location>
</feature>
<feature type="domain" description="EF-hand" evidence="3">
    <location>
        <begin position="18"/>
        <end position="53"/>
    </location>
</feature>
<feature type="region of interest" description="Disordered" evidence="4">
    <location>
        <begin position="256"/>
        <end position="282"/>
    </location>
</feature>
<feature type="region of interest" description="Required for nuclear localization and inhibition of Wnt signaling" evidence="1">
    <location>
        <begin position="305"/>
        <end position="334"/>
    </location>
</feature>
<feature type="region of interest" description="Disordered" evidence="4">
    <location>
        <begin position="639"/>
        <end position="690"/>
    </location>
</feature>
<feature type="compositionally biased region" description="Basic residues" evidence="4">
    <location>
        <begin position="257"/>
        <end position="273"/>
    </location>
</feature>
<feature type="compositionally biased region" description="Low complexity" evidence="4">
    <location>
        <begin position="642"/>
        <end position="664"/>
    </location>
</feature>
<feature type="compositionally biased region" description="Low complexity" evidence="4">
    <location>
        <begin position="673"/>
        <end position="690"/>
    </location>
</feature>
<name>NKD_AEDAE</name>
<reference evidence="5" key="1">
    <citation type="journal article" date="2007" name="Science">
        <title>Genome sequence of Aedes aegypti, a major arbovirus vector.</title>
        <authorList>
            <person name="Nene V."/>
            <person name="Wortman J.R."/>
            <person name="Lawson D."/>
            <person name="Haas B.J."/>
            <person name="Kodira C.D."/>
            <person name="Tu Z.J."/>
            <person name="Loftus B.J."/>
            <person name="Xi Z."/>
            <person name="Megy K."/>
            <person name="Grabherr M."/>
            <person name="Ren Q."/>
            <person name="Zdobnov E.M."/>
            <person name="Lobo N.F."/>
            <person name="Campbell K.S."/>
            <person name="Brown S.E."/>
            <person name="Bonaldo M.F."/>
            <person name="Zhu J."/>
            <person name="Sinkins S.P."/>
            <person name="Hogenkamp D.G."/>
            <person name="Amedeo P."/>
            <person name="Arensburger P."/>
            <person name="Atkinson P.W."/>
            <person name="Bidwell S.L."/>
            <person name="Biedler J."/>
            <person name="Birney E."/>
            <person name="Bruggner R.V."/>
            <person name="Costas J."/>
            <person name="Coy M.R."/>
            <person name="Crabtree J."/>
            <person name="Crawford M."/>
            <person name="DeBruyn B."/>
            <person name="DeCaprio D."/>
            <person name="Eiglmeier K."/>
            <person name="Eisenstadt E."/>
            <person name="El-Dorry H."/>
            <person name="Gelbart W.M."/>
            <person name="Gomes S.L."/>
            <person name="Hammond M."/>
            <person name="Hannick L.I."/>
            <person name="Hogan J.R."/>
            <person name="Holmes M.H."/>
            <person name="Jaffe D."/>
            <person name="Johnston S.J."/>
            <person name="Kennedy R.C."/>
            <person name="Koo H."/>
            <person name="Kravitz S."/>
            <person name="Kriventseva E.V."/>
            <person name="Kulp D."/>
            <person name="Labutti K."/>
            <person name="Lee E."/>
            <person name="Li S."/>
            <person name="Lovin D.D."/>
            <person name="Mao C."/>
            <person name="Mauceli E."/>
            <person name="Menck C.F."/>
            <person name="Miller J.R."/>
            <person name="Montgomery P."/>
            <person name="Mori A."/>
            <person name="Nascimento A.L."/>
            <person name="Naveira H.F."/>
            <person name="Nusbaum C."/>
            <person name="O'Leary S.B."/>
            <person name="Orvis J."/>
            <person name="Pertea M."/>
            <person name="Quesneville H."/>
            <person name="Reidenbach K.R."/>
            <person name="Rogers Y.-H.C."/>
            <person name="Roth C.W."/>
            <person name="Schneider J.R."/>
            <person name="Schatz M."/>
            <person name="Shumway M."/>
            <person name="Stanke M."/>
            <person name="Stinson E.O."/>
            <person name="Tubio J.M.C."/>
            <person name="Vanzee J.P."/>
            <person name="Verjovski-Almeida S."/>
            <person name="Werner D."/>
            <person name="White O.R."/>
            <person name="Wyder S."/>
            <person name="Zeng Q."/>
            <person name="Zhao Q."/>
            <person name="Zhao Y."/>
            <person name="Hill C.A."/>
            <person name="Raikhel A.S."/>
            <person name="Soares M.B."/>
            <person name="Knudson D.L."/>
            <person name="Lee N.H."/>
            <person name="Galagan J."/>
            <person name="Salzberg S.L."/>
            <person name="Paulsen I.T."/>
            <person name="Dimopoulos G."/>
            <person name="Collins F.H."/>
            <person name="Bruce B."/>
            <person name="Fraser-Liggett C.M."/>
            <person name="Severson D.W."/>
        </authorList>
    </citation>
    <scope>NUCLEOTIDE SEQUENCE [LARGE SCALE GENOMIC DNA]</scope>
    <source>
        <strain>LVPib12</strain>
    </source>
</reference>
<evidence type="ECO:0000250" key="1">
    <source>
        <dbReference type="UniProtKB" id="Q9VVV9"/>
    </source>
</evidence>
<evidence type="ECO:0000255" key="2"/>
<evidence type="ECO:0000255" key="3">
    <source>
        <dbReference type="PROSITE-ProRule" id="PRU00448"/>
    </source>
</evidence>
<evidence type="ECO:0000256" key="4">
    <source>
        <dbReference type="SAM" id="MobiDB-lite"/>
    </source>
</evidence>
<evidence type="ECO:0000312" key="5">
    <source>
        <dbReference type="EMBL" id="EAT33675.1"/>
    </source>
</evidence>
<organism>
    <name type="scientific">Aedes aegypti</name>
    <name type="common">Yellowfever mosquito</name>
    <name type="synonym">Culex aegypti</name>
    <dbReference type="NCBI Taxonomy" id="7159"/>
    <lineage>
        <taxon>Eukaryota</taxon>
        <taxon>Metazoa</taxon>
        <taxon>Ecdysozoa</taxon>
        <taxon>Arthropoda</taxon>
        <taxon>Hexapoda</taxon>
        <taxon>Insecta</taxon>
        <taxon>Pterygota</taxon>
        <taxon>Neoptera</taxon>
        <taxon>Endopterygota</taxon>
        <taxon>Diptera</taxon>
        <taxon>Nematocera</taxon>
        <taxon>Culicoidea</taxon>
        <taxon>Culicidae</taxon>
        <taxon>Culicinae</taxon>
        <taxon>Aedini</taxon>
        <taxon>Aedes</taxon>
        <taxon>Stegomyia</taxon>
    </lineage>
</organism>
<accession>Q16HE8</accession>
<gene>
    <name evidence="1" type="primary">nkd</name>
    <name type="ORF">AAEL014048</name>
</gene>
<keyword id="KW-1003">Cell membrane</keyword>
<keyword id="KW-0963">Cytoplasm</keyword>
<keyword id="KW-0217">Developmental protein</keyword>
<keyword id="KW-0472">Membrane</keyword>
<keyword id="KW-0479">Metal-binding</keyword>
<keyword id="KW-0539">Nucleus</keyword>
<keyword id="KW-1185">Reference proteome</keyword>
<keyword id="KW-0879">Wnt signaling pathway</keyword>